<accession>A7Z769</accession>
<organism>
    <name type="scientific">Bacillus velezensis (strain DSM 23117 / BGSC 10A6 / LMG 26770 / FZB42)</name>
    <name type="common">Bacillus amyloliquefaciens subsp. plantarum</name>
    <dbReference type="NCBI Taxonomy" id="326423"/>
    <lineage>
        <taxon>Bacteria</taxon>
        <taxon>Bacillati</taxon>
        <taxon>Bacillota</taxon>
        <taxon>Bacilli</taxon>
        <taxon>Bacillales</taxon>
        <taxon>Bacillaceae</taxon>
        <taxon>Bacillus</taxon>
        <taxon>Bacillus amyloliquefaciens group</taxon>
    </lineage>
</organism>
<dbReference type="EMBL" id="CP000560">
    <property type="protein sequence ID" value="ABS74845.1"/>
    <property type="molecule type" value="Genomic_DNA"/>
</dbReference>
<dbReference type="RefSeq" id="WP_003152683.1">
    <property type="nucleotide sequence ID" value="NC_009725.2"/>
</dbReference>
<dbReference type="SMR" id="A7Z769"/>
<dbReference type="GeneID" id="93081628"/>
<dbReference type="KEGG" id="bay:RBAM_024850"/>
<dbReference type="HOGENOM" id="CLU_087936_1_0_9"/>
<dbReference type="Proteomes" id="UP000001120">
    <property type="component" value="Chromosome"/>
</dbReference>
<dbReference type="GO" id="GO:0005737">
    <property type="term" value="C:cytoplasm"/>
    <property type="evidence" value="ECO:0007669"/>
    <property type="project" value="UniProtKB-SubCell"/>
</dbReference>
<dbReference type="GO" id="GO:0009379">
    <property type="term" value="C:Holliday junction helicase complex"/>
    <property type="evidence" value="ECO:0007669"/>
    <property type="project" value="InterPro"/>
</dbReference>
<dbReference type="GO" id="GO:0048476">
    <property type="term" value="C:Holliday junction resolvase complex"/>
    <property type="evidence" value="ECO:0007669"/>
    <property type="project" value="UniProtKB-UniRule"/>
</dbReference>
<dbReference type="GO" id="GO:0005524">
    <property type="term" value="F:ATP binding"/>
    <property type="evidence" value="ECO:0007669"/>
    <property type="project" value="InterPro"/>
</dbReference>
<dbReference type="GO" id="GO:0000400">
    <property type="term" value="F:four-way junction DNA binding"/>
    <property type="evidence" value="ECO:0007669"/>
    <property type="project" value="UniProtKB-UniRule"/>
</dbReference>
<dbReference type="GO" id="GO:0009378">
    <property type="term" value="F:four-way junction helicase activity"/>
    <property type="evidence" value="ECO:0007669"/>
    <property type="project" value="InterPro"/>
</dbReference>
<dbReference type="GO" id="GO:0006310">
    <property type="term" value="P:DNA recombination"/>
    <property type="evidence" value="ECO:0007669"/>
    <property type="project" value="UniProtKB-UniRule"/>
</dbReference>
<dbReference type="GO" id="GO:0006281">
    <property type="term" value="P:DNA repair"/>
    <property type="evidence" value="ECO:0007669"/>
    <property type="project" value="UniProtKB-UniRule"/>
</dbReference>
<dbReference type="CDD" id="cd14332">
    <property type="entry name" value="UBA_RuvA_C"/>
    <property type="match status" value="1"/>
</dbReference>
<dbReference type="Gene3D" id="1.10.150.20">
    <property type="entry name" value="5' to 3' exonuclease, C-terminal subdomain"/>
    <property type="match status" value="1"/>
</dbReference>
<dbReference type="Gene3D" id="1.10.8.10">
    <property type="entry name" value="DNA helicase RuvA subunit, C-terminal domain"/>
    <property type="match status" value="1"/>
</dbReference>
<dbReference type="Gene3D" id="2.40.50.140">
    <property type="entry name" value="Nucleic acid-binding proteins"/>
    <property type="match status" value="1"/>
</dbReference>
<dbReference type="HAMAP" id="MF_00031">
    <property type="entry name" value="DNA_HJ_migration_RuvA"/>
    <property type="match status" value="1"/>
</dbReference>
<dbReference type="InterPro" id="IPR013849">
    <property type="entry name" value="DNA_helicase_Holl-junc_RuvA_I"/>
</dbReference>
<dbReference type="InterPro" id="IPR003583">
    <property type="entry name" value="Hlx-hairpin-Hlx_DNA-bd_motif"/>
</dbReference>
<dbReference type="InterPro" id="IPR012340">
    <property type="entry name" value="NA-bd_OB-fold"/>
</dbReference>
<dbReference type="InterPro" id="IPR000085">
    <property type="entry name" value="RuvA"/>
</dbReference>
<dbReference type="InterPro" id="IPR010994">
    <property type="entry name" value="RuvA_2-like"/>
</dbReference>
<dbReference type="InterPro" id="IPR011114">
    <property type="entry name" value="RuvA_C"/>
</dbReference>
<dbReference type="InterPro" id="IPR036267">
    <property type="entry name" value="RuvA_C_sf"/>
</dbReference>
<dbReference type="NCBIfam" id="TIGR00084">
    <property type="entry name" value="ruvA"/>
    <property type="match status" value="1"/>
</dbReference>
<dbReference type="Pfam" id="PF14520">
    <property type="entry name" value="HHH_5"/>
    <property type="match status" value="1"/>
</dbReference>
<dbReference type="Pfam" id="PF07499">
    <property type="entry name" value="RuvA_C"/>
    <property type="match status" value="1"/>
</dbReference>
<dbReference type="Pfam" id="PF01330">
    <property type="entry name" value="RuvA_N"/>
    <property type="match status" value="1"/>
</dbReference>
<dbReference type="SMART" id="SM00278">
    <property type="entry name" value="HhH1"/>
    <property type="match status" value="2"/>
</dbReference>
<dbReference type="SUPFAM" id="SSF46929">
    <property type="entry name" value="DNA helicase RuvA subunit, C-terminal domain"/>
    <property type="match status" value="1"/>
</dbReference>
<dbReference type="SUPFAM" id="SSF50249">
    <property type="entry name" value="Nucleic acid-binding proteins"/>
    <property type="match status" value="1"/>
</dbReference>
<dbReference type="SUPFAM" id="SSF47781">
    <property type="entry name" value="RuvA domain 2-like"/>
    <property type="match status" value="1"/>
</dbReference>
<comment type="function">
    <text evidence="1">The RuvA-RuvB-RuvC complex processes Holliday junction (HJ) DNA during genetic recombination and DNA repair, while the RuvA-RuvB complex plays an important role in the rescue of blocked DNA replication forks via replication fork reversal (RFR). RuvA specifically binds to HJ cruciform DNA, conferring on it an open structure. The RuvB hexamer acts as an ATP-dependent pump, pulling dsDNA into and through the RuvAB complex. HJ branch migration allows RuvC to scan DNA until it finds its consensus sequence, where it cleaves and resolves the cruciform DNA.</text>
</comment>
<comment type="subunit">
    <text evidence="1">Homotetramer. Forms an RuvA(8)-RuvB(12)-Holliday junction (HJ) complex. HJ DNA is sandwiched between 2 RuvA tetramers; dsDNA enters through RuvA and exits via RuvB. An RuvB hexamer assembles on each DNA strand where it exits the tetramer. Each RuvB hexamer is contacted by two RuvA subunits (via domain III) on 2 adjacent RuvB subunits; this complex drives branch migration. In the full resolvosome a probable DNA-RuvA(4)-RuvB(12)-RuvC(2) complex forms which resolves the HJ.</text>
</comment>
<comment type="subcellular location">
    <subcellularLocation>
        <location evidence="1">Cytoplasm</location>
    </subcellularLocation>
</comment>
<comment type="domain">
    <text evidence="1">Has three domains with a flexible linker between the domains II and III and assumes an 'L' shape. Domain III is highly mobile and contacts RuvB.</text>
</comment>
<comment type="similarity">
    <text evidence="1">Belongs to the RuvA family.</text>
</comment>
<feature type="chain" id="PRO_1000002396" description="Holliday junction branch migration complex subunit RuvA">
    <location>
        <begin position="1"/>
        <end position="201"/>
    </location>
</feature>
<feature type="region of interest" description="Domain I" evidence="1">
    <location>
        <begin position="1"/>
        <end position="61"/>
    </location>
</feature>
<feature type="region of interest" description="Domain II" evidence="1">
    <location>
        <begin position="62"/>
        <end position="140"/>
    </location>
</feature>
<feature type="region of interest" description="Flexible linker" evidence="1">
    <location>
        <begin position="141"/>
        <end position="150"/>
    </location>
</feature>
<feature type="region of interest" description="Domain III" evidence="1">
    <location>
        <begin position="151"/>
        <end position="201"/>
    </location>
</feature>
<gene>
    <name evidence="1" type="primary">ruvA</name>
    <name type="ordered locus">RBAM_024850</name>
</gene>
<keyword id="KW-0963">Cytoplasm</keyword>
<keyword id="KW-0227">DNA damage</keyword>
<keyword id="KW-0233">DNA recombination</keyword>
<keyword id="KW-0234">DNA repair</keyword>
<keyword id="KW-0238">DNA-binding</keyword>
<protein>
    <recommendedName>
        <fullName evidence="1">Holliday junction branch migration complex subunit RuvA</fullName>
    </recommendedName>
</protein>
<evidence type="ECO:0000255" key="1">
    <source>
        <dbReference type="HAMAP-Rule" id="MF_00031"/>
    </source>
</evidence>
<name>RUVA_BACVZ</name>
<reference key="1">
    <citation type="journal article" date="2007" name="Nat. Biotechnol.">
        <title>Comparative analysis of the complete genome sequence of the plant growth-promoting bacterium Bacillus amyloliquefaciens FZB42.</title>
        <authorList>
            <person name="Chen X.H."/>
            <person name="Koumoutsi A."/>
            <person name="Scholz R."/>
            <person name="Eisenreich A."/>
            <person name="Schneider K."/>
            <person name="Heinemeyer I."/>
            <person name="Morgenstern B."/>
            <person name="Voss B."/>
            <person name="Hess W.R."/>
            <person name="Reva O."/>
            <person name="Junge H."/>
            <person name="Voigt B."/>
            <person name="Jungblut P.R."/>
            <person name="Vater J."/>
            <person name="Suessmuth R."/>
            <person name="Liesegang H."/>
            <person name="Strittmatter A."/>
            <person name="Gottschalk G."/>
            <person name="Borriss R."/>
        </authorList>
    </citation>
    <scope>NUCLEOTIDE SEQUENCE [LARGE SCALE GENOMIC DNA]</scope>
    <source>
        <strain>DSM 23117 / BGSC 10A6 / LMG 26770 / FZB42</strain>
    </source>
</reference>
<sequence length="201" mass="22415">MIEFVKGTIDYVSPQYIVIENGGIGYQVFTPNPFIYKVSNQETIFTYHHIKEDAFSLYGFSTREEKALFTKLLNVTGIGPKGALAILGSGDPGAVIEAIEQEDEAFLVKFPGVGKKTARQIILDLKGKLADVVPEMIDNLFNHEARIEKQEAETALDEALEALRVLGYAEKEIKKVLPHLKEETALSTDQYVKKALQKLLK</sequence>
<proteinExistence type="inferred from homology"/>